<comment type="function">
    <text evidence="1">Secreted metalloproteinase that allows assimilation of proteinaceous substrates. Shows high activities on basic nuclear substrates such as histone and protamine (By similarity).</text>
</comment>
<comment type="catalytic activity">
    <reaction>
        <text>Preferential cleavage of bonds with hydrophobic residues in P1'. Also 3-Asn-|-Gln-4 and 8-Gly-|-Ser-9 bonds in insulin B chain.</text>
        <dbReference type="EC" id="3.4.24.39"/>
    </reaction>
</comment>
<comment type="cofactor">
    <cofactor evidence="1">
        <name>Zn(2+)</name>
        <dbReference type="ChEBI" id="CHEBI:29105"/>
    </cofactor>
    <text evidence="1">Binds 1 zinc ion per subunit.</text>
</comment>
<comment type="subcellular location">
    <subcellularLocation>
        <location evidence="1">Secreted</location>
    </subcellularLocation>
</comment>
<comment type="similarity">
    <text evidence="4">Belongs to the peptidase M35 family.</text>
</comment>
<evidence type="ECO:0000250" key="1"/>
<evidence type="ECO:0000255" key="2"/>
<evidence type="ECO:0000255" key="3">
    <source>
        <dbReference type="PROSITE-ProRule" id="PRU10095"/>
    </source>
</evidence>
<evidence type="ECO:0000305" key="4"/>
<organism>
    <name type="scientific">Aspergillus flavus (strain ATCC 200026 / FGSC A1120 / IAM 13836 / NRRL 3357 / JCM 12722 / SRRC 167)</name>
    <dbReference type="NCBI Taxonomy" id="332952"/>
    <lineage>
        <taxon>Eukaryota</taxon>
        <taxon>Fungi</taxon>
        <taxon>Dikarya</taxon>
        <taxon>Ascomycota</taxon>
        <taxon>Pezizomycotina</taxon>
        <taxon>Eurotiomycetes</taxon>
        <taxon>Eurotiomycetidae</taxon>
        <taxon>Eurotiales</taxon>
        <taxon>Aspergillaceae</taxon>
        <taxon>Aspergillus</taxon>
        <taxon>Aspergillus subgen. Circumdati</taxon>
    </lineage>
</organism>
<name>NPIIA_ASPFN</name>
<keyword id="KW-0165">Cleavage on pair of basic residues</keyword>
<keyword id="KW-1015">Disulfide bond</keyword>
<keyword id="KW-0378">Hydrolase</keyword>
<keyword id="KW-0479">Metal-binding</keyword>
<keyword id="KW-0482">Metalloprotease</keyword>
<keyword id="KW-0645">Protease</keyword>
<keyword id="KW-0964">Secreted</keyword>
<keyword id="KW-0732">Signal</keyword>
<keyword id="KW-0862">Zinc</keyword>
<keyword id="KW-0865">Zymogen</keyword>
<proteinExistence type="inferred from homology"/>
<dbReference type="EC" id="3.4.24.39"/>
<dbReference type="EMBL" id="EQ963479">
    <property type="protein sequence ID" value="EED49723.1"/>
    <property type="molecule type" value="Genomic_DNA"/>
</dbReference>
<dbReference type="RefSeq" id="XP_002380104.1">
    <property type="nucleotide sequence ID" value="XM_002380063.1"/>
</dbReference>
<dbReference type="SMR" id="B8NJB2"/>
<dbReference type="STRING" id="332952.B8NJB2"/>
<dbReference type="MEROPS" id="M35.002"/>
<dbReference type="EnsemblFungi" id="EED49723">
    <property type="protein sequence ID" value="EED49723"/>
    <property type="gene ID" value="AFLA_065450"/>
</dbReference>
<dbReference type="VEuPathDB" id="FungiDB:AFLA_008474"/>
<dbReference type="eggNOG" id="ENOG502SGF5">
    <property type="taxonomic scope" value="Eukaryota"/>
</dbReference>
<dbReference type="HOGENOM" id="CLU_039313_1_1_1"/>
<dbReference type="OMA" id="ANCDLYY"/>
<dbReference type="GO" id="GO:0005576">
    <property type="term" value="C:extracellular region"/>
    <property type="evidence" value="ECO:0007669"/>
    <property type="project" value="UniProtKB-SubCell"/>
</dbReference>
<dbReference type="GO" id="GO:0046872">
    <property type="term" value="F:metal ion binding"/>
    <property type="evidence" value="ECO:0007669"/>
    <property type="project" value="UniProtKB-KW"/>
</dbReference>
<dbReference type="GO" id="GO:0004222">
    <property type="term" value="F:metalloendopeptidase activity"/>
    <property type="evidence" value="ECO:0007669"/>
    <property type="project" value="InterPro"/>
</dbReference>
<dbReference type="GO" id="GO:0006508">
    <property type="term" value="P:proteolysis"/>
    <property type="evidence" value="ECO:0007669"/>
    <property type="project" value="UniProtKB-KW"/>
</dbReference>
<dbReference type="CDD" id="cd11008">
    <property type="entry name" value="M35_deuterolysin_like"/>
    <property type="match status" value="1"/>
</dbReference>
<dbReference type="Gene3D" id="2.60.40.2970">
    <property type="match status" value="1"/>
</dbReference>
<dbReference type="Gene3D" id="3.40.390.10">
    <property type="entry name" value="Collagenase (Catalytic Domain)"/>
    <property type="match status" value="1"/>
</dbReference>
<dbReference type="InterPro" id="IPR050414">
    <property type="entry name" value="Fungal_M35_metalloproteases"/>
</dbReference>
<dbReference type="InterPro" id="IPR024079">
    <property type="entry name" value="MetalloPept_cat_dom_sf"/>
</dbReference>
<dbReference type="InterPro" id="IPR001384">
    <property type="entry name" value="Peptidase_M35"/>
</dbReference>
<dbReference type="PANTHER" id="PTHR37016">
    <property type="match status" value="1"/>
</dbReference>
<dbReference type="PANTHER" id="PTHR37016:SF3">
    <property type="entry name" value="NEUTRAL PROTEASE 2-RELATED"/>
    <property type="match status" value="1"/>
</dbReference>
<dbReference type="Pfam" id="PF02102">
    <property type="entry name" value="Peptidase_M35"/>
    <property type="match status" value="1"/>
</dbReference>
<dbReference type="PRINTS" id="PR00768">
    <property type="entry name" value="DEUTEROLYSIN"/>
</dbReference>
<dbReference type="SUPFAM" id="SSF55486">
    <property type="entry name" value="Metalloproteases ('zincins'), catalytic domain"/>
    <property type="match status" value="1"/>
</dbReference>
<dbReference type="PROSITE" id="PS00142">
    <property type="entry name" value="ZINC_PROTEASE"/>
    <property type="match status" value="1"/>
</dbReference>
<protein>
    <recommendedName>
        <fullName>Neutral protease 2 homolog AFLA_065450</fullName>
        <ecNumber>3.4.24.39</ecNumber>
    </recommendedName>
    <alternativeName>
        <fullName>Deuterolysin AFLA_065450</fullName>
    </alternativeName>
</protein>
<sequence>MRFISASSLLLALAPTLNAVPVEVAGSAQGLDVTLSQVGNTRIKAVVKNTGSEDVTFVHLNFFKDAAPVQKVSLFRNGMLPNLNLATTEVQFQGIKQRLITEGLSDDALTTLAPGATIEDEFDIASTSDLSEGGTITINSNGLVPITTDNKVTGYIPFTSNELSIDVDAAEAASVTQAVKILERRTKVTSCSGSRLSALQTALRNTVSLARAAATAAQSGSSSRFQEYFKTTSSSTRSTVAARLNAVANEAASTSSGSTTYYCSDVYGYCSSNVLAYTLPSYNIIANCDLYYSYLPALTSTCHAQDQATTTLHEFTHAPGVYSPGTDDLGYGYSAATALSASQALLNADTYALFANGTYSSLLSFVNPLLTPDNSCQPQLLDARTCNRQFGRSTSCKVYWKAVE</sequence>
<reference key="1">
    <citation type="journal article" date="2015" name="Genome Announc.">
        <title>Genome sequence of Aspergillus flavus NRRL 3357, a strain that causes aflatoxin contamination of food and feed.</title>
        <authorList>
            <person name="Nierman W.C."/>
            <person name="Yu J."/>
            <person name="Fedorova-Abrams N.D."/>
            <person name="Losada L."/>
            <person name="Cleveland T.E."/>
            <person name="Bhatnagar D."/>
            <person name="Bennett J.W."/>
            <person name="Dean R."/>
            <person name="Payne G.A."/>
        </authorList>
    </citation>
    <scope>NUCLEOTIDE SEQUENCE [LARGE SCALE GENOMIC DNA]</scope>
    <source>
        <strain>ATCC 200026 / FGSC A1120 / IAM 13836 / NRRL 3357 / JCM 12722 / SRRC 167</strain>
    </source>
</reference>
<accession>B8NJB2</accession>
<gene>
    <name type="ORF">AFLA_065450</name>
</gene>
<feature type="signal peptide" evidence="2">
    <location>
        <begin position="1"/>
        <end position="19"/>
    </location>
</feature>
<feature type="propeptide" id="PRO_0000407090" evidence="1">
    <location>
        <begin position="20"/>
        <end position="185"/>
    </location>
</feature>
<feature type="chain" id="PRO_0000407091" description="Neutral protease 2 homolog AFLA_065450">
    <location>
        <begin position="186"/>
        <end position="404"/>
    </location>
</feature>
<feature type="active site" evidence="3">
    <location>
        <position position="314"/>
    </location>
</feature>
<feature type="binding site" evidence="3">
    <location>
        <position position="313"/>
    </location>
    <ligand>
        <name>Zn(2+)</name>
        <dbReference type="ChEBI" id="CHEBI:29105"/>
        <note>catalytic</note>
    </ligand>
</feature>
<feature type="binding site" evidence="3">
    <location>
        <position position="317"/>
    </location>
    <ligand>
        <name>Zn(2+)</name>
        <dbReference type="ChEBI" id="CHEBI:29105"/>
        <note>catalytic</note>
    </ligand>
</feature>
<feature type="binding site" evidence="3">
    <location>
        <position position="328"/>
    </location>
    <ligand>
        <name>Zn(2+)</name>
        <dbReference type="ChEBI" id="CHEBI:29105"/>
        <note>catalytic</note>
    </ligand>
</feature>
<feature type="disulfide bond" evidence="1">
    <location>
        <begin position="191"/>
        <end position="263"/>
    </location>
</feature>
<feature type="disulfide bond" evidence="1">
    <location>
        <begin position="270"/>
        <end position="288"/>
    </location>
</feature>